<feature type="chain" id="PRO_1000201532" description="Ribosomal RNA large subunit methyltransferase M">
    <location>
        <begin position="1"/>
        <end position="366"/>
    </location>
</feature>
<feature type="active site" description="Proton acceptor" evidence="1">
    <location>
        <position position="306"/>
    </location>
</feature>
<feature type="binding site" evidence="1">
    <location>
        <position position="188"/>
    </location>
    <ligand>
        <name>S-adenosyl-L-methionine</name>
        <dbReference type="ChEBI" id="CHEBI:59789"/>
    </ligand>
</feature>
<feature type="binding site" evidence="1">
    <location>
        <begin position="221"/>
        <end position="224"/>
    </location>
    <ligand>
        <name>S-adenosyl-L-methionine</name>
        <dbReference type="ChEBI" id="CHEBI:59789"/>
    </ligand>
</feature>
<feature type="binding site" evidence="1">
    <location>
        <position position="240"/>
    </location>
    <ligand>
        <name>S-adenosyl-L-methionine</name>
        <dbReference type="ChEBI" id="CHEBI:59789"/>
    </ligand>
</feature>
<feature type="binding site" evidence="1">
    <location>
        <position position="260"/>
    </location>
    <ligand>
        <name>S-adenosyl-L-methionine</name>
        <dbReference type="ChEBI" id="CHEBI:59789"/>
    </ligand>
</feature>
<feature type="binding site" evidence="1">
    <location>
        <position position="277"/>
    </location>
    <ligand>
        <name>S-adenosyl-L-methionine</name>
        <dbReference type="ChEBI" id="CHEBI:59789"/>
    </ligand>
</feature>
<evidence type="ECO:0000255" key="1">
    <source>
        <dbReference type="HAMAP-Rule" id="MF_01551"/>
    </source>
</evidence>
<accession>B4TUK1</accession>
<sequence length="366" mass="42020">MNKVVLLCRPGFEKECAAEITDKAGKREIFGFARVKENAGYVIYECYQPEDGEKLISELPFSSLIFARQWFVVGELLQHLPPEDRITPIVGMLQGVVEKGGELRVEVADTNESKELMKFCRKFTVPLRAALRDAGVLTNYETPKRPVVHVFFIAPGCCYTGYSFAHNNSPFYMGIPRLKFPSDAPSRSTLKLEEALHVFIPEDEWDERLANGMYAVDLGACPGGWTYQLVKRNMWVYSVDNGPMAQSLMDTGQVTWLREDGFRYRPNRNNISWMVCDMVEKPAKVTALMAQWLVNGWCRETIFNLKLPMKKRYEEVSHNLAYLQAQLDEHGVNAQIQARQLYHDREEVTVHVRRLWAAVGGRRDER</sequence>
<protein>
    <recommendedName>
        <fullName evidence="1">Ribosomal RNA large subunit methyltransferase M</fullName>
        <ecNumber evidence="1">2.1.1.186</ecNumber>
    </recommendedName>
    <alternativeName>
        <fullName evidence="1">23S rRNA (cytidine2498-2'-O)-methyltransferase</fullName>
    </alternativeName>
    <alternativeName>
        <fullName evidence="1">23S rRNA 2'-O-ribose methyltransferase RlmM</fullName>
    </alternativeName>
</protein>
<dbReference type="EC" id="2.1.1.186" evidence="1"/>
<dbReference type="EMBL" id="CP001127">
    <property type="protein sequence ID" value="ACF89279.1"/>
    <property type="molecule type" value="Genomic_DNA"/>
</dbReference>
<dbReference type="RefSeq" id="WP_001045494.1">
    <property type="nucleotide sequence ID" value="NC_011094.1"/>
</dbReference>
<dbReference type="SMR" id="B4TUK1"/>
<dbReference type="KEGG" id="sew:SeSA_A3142"/>
<dbReference type="HOGENOM" id="CLU_043780_0_0_6"/>
<dbReference type="Proteomes" id="UP000001865">
    <property type="component" value="Chromosome"/>
</dbReference>
<dbReference type="GO" id="GO:0005737">
    <property type="term" value="C:cytoplasm"/>
    <property type="evidence" value="ECO:0007669"/>
    <property type="project" value="UniProtKB-SubCell"/>
</dbReference>
<dbReference type="GO" id="GO:0008757">
    <property type="term" value="F:S-adenosylmethionine-dependent methyltransferase activity"/>
    <property type="evidence" value="ECO:0007669"/>
    <property type="project" value="UniProtKB-UniRule"/>
</dbReference>
<dbReference type="GO" id="GO:0032259">
    <property type="term" value="P:methylation"/>
    <property type="evidence" value="ECO:0007669"/>
    <property type="project" value="UniProtKB-KW"/>
</dbReference>
<dbReference type="GO" id="GO:0006364">
    <property type="term" value="P:rRNA processing"/>
    <property type="evidence" value="ECO:0007669"/>
    <property type="project" value="UniProtKB-UniRule"/>
</dbReference>
<dbReference type="FunFam" id="3.30.2300.20:FF:000001">
    <property type="entry name" value="Ribosomal RNA large subunit methyltransferase M"/>
    <property type="match status" value="1"/>
</dbReference>
<dbReference type="FunFam" id="3.30.70.2810:FF:000001">
    <property type="entry name" value="Ribosomal RNA large subunit methyltransferase M"/>
    <property type="match status" value="1"/>
</dbReference>
<dbReference type="FunFam" id="3.40.50.150:FF:000020">
    <property type="entry name" value="Ribosomal RNA large subunit methyltransferase M"/>
    <property type="match status" value="1"/>
</dbReference>
<dbReference type="Gene3D" id="3.30.2300.20">
    <property type="match status" value="1"/>
</dbReference>
<dbReference type="Gene3D" id="3.30.70.2810">
    <property type="match status" value="1"/>
</dbReference>
<dbReference type="Gene3D" id="3.40.50.150">
    <property type="entry name" value="Vaccinia Virus protein VP39"/>
    <property type="match status" value="1"/>
</dbReference>
<dbReference type="HAMAP" id="MF_01551">
    <property type="entry name" value="23SrRNA_methyltr_M"/>
    <property type="match status" value="1"/>
</dbReference>
<dbReference type="InterPro" id="IPR040739">
    <property type="entry name" value="RlmM_FDX"/>
</dbReference>
<dbReference type="InterPro" id="IPR048646">
    <property type="entry name" value="RlmM_THUMP-like"/>
</dbReference>
<dbReference type="InterPro" id="IPR002877">
    <property type="entry name" value="RNA_MeTrfase_FtsJ_dom"/>
</dbReference>
<dbReference type="InterPro" id="IPR011224">
    <property type="entry name" value="rRNA_MeTrfase_M"/>
</dbReference>
<dbReference type="InterPro" id="IPR029063">
    <property type="entry name" value="SAM-dependent_MTases_sf"/>
</dbReference>
<dbReference type="NCBIfam" id="NF008734">
    <property type="entry name" value="PRK11760.1"/>
    <property type="match status" value="1"/>
</dbReference>
<dbReference type="PANTHER" id="PTHR37524">
    <property type="entry name" value="RIBOSOMAL RNA LARGE SUBUNIT METHYLTRANSFERASE M"/>
    <property type="match status" value="1"/>
</dbReference>
<dbReference type="PANTHER" id="PTHR37524:SF2">
    <property type="entry name" value="RIBOSOMAL RNA METHYLTRANSFERASE FTSJ DOMAIN-CONTAINING PROTEIN"/>
    <property type="match status" value="1"/>
</dbReference>
<dbReference type="Pfam" id="PF01728">
    <property type="entry name" value="FtsJ"/>
    <property type="match status" value="1"/>
</dbReference>
<dbReference type="Pfam" id="PF18125">
    <property type="entry name" value="RlmM_FDX"/>
    <property type="match status" value="1"/>
</dbReference>
<dbReference type="Pfam" id="PF21239">
    <property type="entry name" value="RLMM_N"/>
    <property type="match status" value="1"/>
</dbReference>
<dbReference type="PIRSF" id="PIRSF028774">
    <property type="entry name" value="UCP028774"/>
    <property type="match status" value="1"/>
</dbReference>
<dbReference type="SUPFAM" id="SSF53335">
    <property type="entry name" value="S-adenosyl-L-methionine-dependent methyltransferases"/>
    <property type="match status" value="1"/>
</dbReference>
<name>RLMM_SALSV</name>
<proteinExistence type="inferred from homology"/>
<reference key="1">
    <citation type="journal article" date="2011" name="J. Bacteriol.">
        <title>Comparative genomics of 28 Salmonella enterica isolates: evidence for CRISPR-mediated adaptive sublineage evolution.</title>
        <authorList>
            <person name="Fricke W.F."/>
            <person name="Mammel M.K."/>
            <person name="McDermott P.F."/>
            <person name="Tartera C."/>
            <person name="White D.G."/>
            <person name="Leclerc J.E."/>
            <person name="Ravel J."/>
            <person name="Cebula T.A."/>
        </authorList>
    </citation>
    <scope>NUCLEOTIDE SEQUENCE [LARGE SCALE GENOMIC DNA]</scope>
    <source>
        <strain>CVM19633</strain>
    </source>
</reference>
<organism>
    <name type="scientific">Salmonella schwarzengrund (strain CVM19633)</name>
    <dbReference type="NCBI Taxonomy" id="439843"/>
    <lineage>
        <taxon>Bacteria</taxon>
        <taxon>Pseudomonadati</taxon>
        <taxon>Pseudomonadota</taxon>
        <taxon>Gammaproteobacteria</taxon>
        <taxon>Enterobacterales</taxon>
        <taxon>Enterobacteriaceae</taxon>
        <taxon>Salmonella</taxon>
    </lineage>
</organism>
<comment type="function">
    <text evidence="1">Catalyzes the 2'-O-methylation at nucleotide C2498 in 23S rRNA.</text>
</comment>
<comment type="catalytic activity">
    <reaction evidence="1">
        <text>cytidine(2498) in 23S rRNA + S-adenosyl-L-methionine = 2'-O-methylcytidine(2498) in 23S rRNA + S-adenosyl-L-homocysteine + H(+)</text>
        <dbReference type="Rhea" id="RHEA:42788"/>
        <dbReference type="Rhea" id="RHEA-COMP:10244"/>
        <dbReference type="Rhea" id="RHEA-COMP:10245"/>
        <dbReference type="ChEBI" id="CHEBI:15378"/>
        <dbReference type="ChEBI" id="CHEBI:57856"/>
        <dbReference type="ChEBI" id="CHEBI:59789"/>
        <dbReference type="ChEBI" id="CHEBI:74495"/>
        <dbReference type="ChEBI" id="CHEBI:82748"/>
        <dbReference type="EC" id="2.1.1.186"/>
    </reaction>
</comment>
<comment type="subunit">
    <text evidence="1">Monomer.</text>
</comment>
<comment type="subcellular location">
    <subcellularLocation>
        <location evidence="1">Cytoplasm</location>
    </subcellularLocation>
</comment>
<comment type="similarity">
    <text evidence="1">Belongs to the class I-like SAM-binding methyltransferase superfamily. RNA methyltransferase RlmE family. RlmM subfamily.</text>
</comment>
<keyword id="KW-0963">Cytoplasm</keyword>
<keyword id="KW-0489">Methyltransferase</keyword>
<keyword id="KW-0698">rRNA processing</keyword>
<keyword id="KW-0949">S-adenosyl-L-methionine</keyword>
<keyword id="KW-0808">Transferase</keyword>
<gene>
    <name evidence="1" type="primary">rlmM</name>
    <name type="ordered locus">SeSA_A3142</name>
</gene>